<keyword id="KW-0472">Membrane</keyword>
<keyword id="KW-0496">Mitochondrion</keyword>
<keyword id="KW-0999">Mitochondrion inner membrane</keyword>
<keyword id="KW-1185">Reference proteome</keyword>
<keyword id="KW-0677">Repeat</keyword>
<keyword id="KW-0812">Transmembrane</keyword>
<keyword id="KW-1133">Transmembrane helix</keyword>
<keyword id="KW-0813">Transport</keyword>
<sequence>MLYSCLASKTTFHFAAGLCSGLTSSILLQPADLLKTRVQQSQKTASLLPTIKTILSSPHPIRGLWRGTLPSALRTGFGSALYFTSLNALRQGLAQTEAAMAIAASSSDGKSRTSSSALPKLSNWGNLATGAVARTAAGFVMMPVTVLKVRYESDYYAYRSLYSAGRDIVRTEGVRGLFSGFGATAARDAPYAGLYVLFYEQLKRRLALVASSEQSEQPLKSTSSSSINFVSGGLAAGLATAITNPFDAVKTRLQLMPGKYGNMIRAVRLMIREDGVRSLFGGLGLRITRKALSSALAWTVYEELILRAEARWAEKDKIDL</sequence>
<name>S2538_ASPFU</name>
<evidence type="ECO:0000250" key="1">
    <source>
        <dbReference type="UniProtKB" id="Q96DW6"/>
    </source>
</evidence>
<evidence type="ECO:0000255" key="2">
    <source>
        <dbReference type="HAMAP-Rule" id="MF_03064"/>
    </source>
</evidence>
<proteinExistence type="inferred from homology"/>
<organism>
    <name type="scientific">Aspergillus fumigatus (strain ATCC MYA-4609 / CBS 101355 / FGSC A1100 / Af293)</name>
    <name type="common">Neosartorya fumigata</name>
    <dbReference type="NCBI Taxonomy" id="330879"/>
    <lineage>
        <taxon>Eukaryota</taxon>
        <taxon>Fungi</taxon>
        <taxon>Dikarya</taxon>
        <taxon>Ascomycota</taxon>
        <taxon>Pezizomycotina</taxon>
        <taxon>Eurotiomycetes</taxon>
        <taxon>Eurotiomycetidae</taxon>
        <taxon>Eurotiales</taxon>
        <taxon>Aspergillaceae</taxon>
        <taxon>Aspergillus</taxon>
        <taxon>Aspergillus subgen. Fumigati</taxon>
    </lineage>
</organism>
<reference key="1">
    <citation type="journal article" date="2005" name="Nature">
        <title>Genomic sequence of the pathogenic and allergenic filamentous fungus Aspergillus fumigatus.</title>
        <authorList>
            <person name="Nierman W.C."/>
            <person name="Pain A."/>
            <person name="Anderson M.J."/>
            <person name="Wortman J.R."/>
            <person name="Kim H.S."/>
            <person name="Arroyo J."/>
            <person name="Berriman M."/>
            <person name="Abe K."/>
            <person name="Archer D.B."/>
            <person name="Bermejo C."/>
            <person name="Bennett J.W."/>
            <person name="Bowyer P."/>
            <person name="Chen D."/>
            <person name="Collins M."/>
            <person name="Coulsen R."/>
            <person name="Davies R."/>
            <person name="Dyer P.S."/>
            <person name="Farman M.L."/>
            <person name="Fedorova N."/>
            <person name="Fedorova N.D."/>
            <person name="Feldblyum T.V."/>
            <person name="Fischer R."/>
            <person name="Fosker N."/>
            <person name="Fraser A."/>
            <person name="Garcia J.L."/>
            <person name="Garcia M.J."/>
            <person name="Goble A."/>
            <person name="Goldman G.H."/>
            <person name="Gomi K."/>
            <person name="Griffith-Jones S."/>
            <person name="Gwilliam R."/>
            <person name="Haas B.J."/>
            <person name="Haas H."/>
            <person name="Harris D.E."/>
            <person name="Horiuchi H."/>
            <person name="Huang J."/>
            <person name="Humphray S."/>
            <person name="Jimenez J."/>
            <person name="Keller N."/>
            <person name="Khouri H."/>
            <person name="Kitamoto K."/>
            <person name="Kobayashi T."/>
            <person name="Konzack S."/>
            <person name="Kulkarni R."/>
            <person name="Kumagai T."/>
            <person name="Lafton A."/>
            <person name="Latge J.-P."/>
            <person name="Li W."/>
            <person name="Lord A."/>
            <person name="Lu C."/>
            <person name="Majoros W.H."/>
            <person name="May G.S."/>
            <person name="Miller B.L."/>
            <person name="Mohamoud Y."/>
            <person name="Molina M."/>
            <person name="Monod M."/>
            <person name="Mouyna I."/>
            <person name="Mulligan S."/>
            <person name="Murphy L.D."/>
            <person name="O'Neil S."/>
            <person name="Paulsen I."/>
            <person name="Penalva M.A."/>
            <person name="Pertea M."/>
            <person name="Price C."/>
            <person name="Pritchard B.L."/>
            <person name="Quail M.A."/>
            <person name="Rabbinowitsch E."/>
            <person name="Rawlins N."/>
            <person name="Rajandream M.A."/>
            <person name="Reichard U."/>
            <person name="Renauld H."/>
            <person name="Robson G.D."/>
            <person name="Rodriguez de Cordoba S."/>
            <person name="Rodriguez-Pena J.M."/>
            <person name="Ronning C.M."/>
            <person name="Rutter S."/>
            <person name="Salzberg S.L."/>
            <person name="Sanchez M."/>
            <person name="Sanchez-Ferrero J.C."/>
            <person name="Saunders D."/>
            <person name="Seeger K."/>
            <person name="Squares R."/>
            <person name="Squares S."/>
            <person name="Takeuchi M."/>
            <person name="Tekaia F."/>
            <person name="Turner G."/>
            <person name="Vazquez de Aldana C.R."/>
            <person name="Weidman J."/>
            <person name="White O."/>
            <person name="Woodward J.R."/>
            <person name="Yu J.-H."/>
            <person name="Fraser C.M."/>
            <person name="Galagan J.E."/>
            <person name="Asai K."/>
            <person name="Machida M."/>
            <person name="Hall N."/>
            <person name="Barrell B.G."/>
            <person name="Denning D.W."/>
        </authorList>
    </citation>
    <scope>NUCLEOTIDE SEQUENCE [LARGE SCALE GENOMIC DNA]</scope>
    <source>
        <strain>ATCC MYA-4609 / CBS 101355 / FGSC A1100 / Af293</strain>
    </source>
</reference>
<gene>
    <name type="ORF">AFUA_4G12340</name>
</gene>
<feature type="chain" id="PRO_0000378926" description="Mitochondrial glycine transporter">
    <location>
        <begin position="1"/>
        <end position="320"/>
    </location>
</feature>
<feature type="transmembrane region" description="Helical; Name=1" evidence="2">
    <location>
        <begin position="14"/>
        <end position="39"/>
    </location>
</feature>
<feature type="transmembrane region" description="Helical; Name=2" evidence="2">
    <location>
        <begin position="67"/>
        <end position="93"/>
    </location>
</feature>
<feature type="transmembrane region" description="Helical; Name=3" evidence="2">
    <location>
        <begin position="127"/>
        <end position="152"/>
    </location>
</feature>
<feature type="transmembrane region" description="Helical; Name=4" evidence="2">
    <location>
        <begin position="180"/>
        <end position="203"/>
    </location>
</feature>
<feature type="transmembrane region" description="Helical; Name=5" evidence="2">
    <location>
        <begin position="227"/>
        <end position="253"/>
    </location>
</feature>
<feature type="transmembrane region" description="Helical; Name=6" evidence="2">
    <location>
        <begin position="282"/>
        <end position="300"/>
    </location>
</feature>
<feature type="repeat" description="Solcar 1" evidence="2">
    <location>
        <begin position="8"/>
        <end position="92"/>
    </location>
</feature>
<feature type="repeat" description="Solcar 2" evidence="2">
    <location>
        <begin position="121"/>
        <end position="205"/>
    </location>
</feature>
<feature type="repeat" description="Solcar 3" evidence="2">
    <location>
        <begin position="223"/>
        <end position="307"/>
    </location>
</feature>
<dbReference type="EMBL" id="AAHF01000005">
    <property type="protein sequence ID" value="EAL89559.1"/>
    <property type="molecule type" value="Genomic_DNA"/>
</dbReference>
<dbReference type="RefSeq" id="XP_751597.1">
    <property type="nucleotide sequence ID" value="XM_746504.1"/>
</dbReference>
<dbReference type="SMR" id="Q4WQC5"/>
<dbReference type="FunCoup" id="Q4WQC5">
    <property type="interactions" value="102"/>
</dbReference>
<dbReference type="STRING" id="330879.Q4WQC5"/>
<dbReference type="EnsemblFungi" id="EAL89559">
    <property type="protein sequence ID" value="EAL89559"/>
    <property type="gene ID" value="AFUA_4G12340"/>
</dbReference>
<dbReference type="GeneID" id="3509109"/>
<dbReference type="KEGG" id="afm:AFUA_4G12340"/>
<dbReference type="VEuPathDB" id="FungiDB:Afu4g12340"/>
<dbReference type="eggNOG" id="KOG0766">
    <property type="taxonomic scope" value="Eukaryota"/>
</dbReference>
<dbReference type="HOGENOM" id="CLU_015166_0_3_1"/>
<dbReference type="InParanoid" id="Q4WQC5"/>
<dbReference type="OMA" id="WGIYEEL"/>
<dbReference type="OrthoDB" id="1924968at2759"/>
<dbReference type="Proteomes" id="UP000002530">
    <property type="component" value="Chromosome 4"/>
</dbReference>
<dbReference type="GO" id="GO:0005743">
    <property type="term" value="C:mitochondrial inner membrane"/>
    <property type="evidence" value="ECO:0007669"/>
    <property type="project" value="UniProtKB-SubCell"/>
</dbReference>
<dbReference type="GO" id="GO:0005739">
    <property type="term" value="C:mitochondrion"/>
    <property type="evidence" value="ECO:0000318"/>
    <property type="project" value="GO_Central"/>
</dbReference>
<dbReference type="GO" id="GO:0015187">
    <property type="term" value="F:glycine transmembrane transporter activity"/>
    <property type="evidence" value="ECO:0000318"/>
    <property type="project" value="GO_Central"/>
</dbReference>
<dbReference type="GO" id="GO:1904983">
    <property type="term" value="P:glycine import into mitochondrion"/>
    <property type="evidence" value="ECO:0000318"/>
    <property type="project" value="GO_Central"/>
</dbReference>
<dbReference type="GO" id="GO:0006783">
    <property type="term" value="P:heme biosynthetic process"/>
    <property type="evidence" value="ECO:0007669"/>
    <property type="project" value="EnsemblFungi"/>
</dbReference>
<dbReference type="FunFam" id="1.50.40.10:FF:000103">
    <property type="entry name" value="Mitochondrial glycine transporter"/>
    <property type="match status" value="1"/>
</dbReference>
<dbReference type="Gene3D" id="1.50.40.10">
    <property type="entry name" value="Mitochondrial carrier domain"/>
    <property type="match status" value="1"/>
</dbReference>
<dbReference type="HAMAP" id="MF_03064">
    <property type="entry name" value="SLC25A38"/>
    <property type="match status" value="1"/>
</dbReference>
<dbReference type="InterPro" id="IPR030847">
    <property type="entry name" value="Hem25/SLC25A38"/>
</dbReference>
<dbReference type="InterPro" id="IPR018108">
    <property type="entry name" value="Mitochondrial_sb/sol_carrier"/>
</dbReference>
<dbReference type="InterPro" id="IPR023395">
    <property type="entry name" value="Mt_carrier_dom_sf"/>
</dbReference>
<dbReference type="PANTHER" id="PTHR46181">
    <property type="entry name" value="MITOCHONDRIAL GLYCINE TRANSPORTER"/>
    <property type="match status" value="1"/>
</dbReference>
<dbReference type="PANTHER" id="PTHR46181:SF3">
    <property type="entry name" value="MITOCHONDRIAL GLYCINE TRANSPORTER"/>
    <property type="match status" value="1"/>
</dbReference>
<dbReference type="Pfam" id="PF00153">
    <property type="entry name" value="Mito_carr"/>
    <property type="match status" value="3"/>
</dbReference>
<dbReference type="SUPFAM" id="SSF103506">
    <property type="entry name" value="Mitochondrial carrier"/>
    <property type="match status" value="1"/>
</dbReference>
<dbReference type="PROSITE" id="PS50920">
    <property type="entry name" value="SOLCAR"/>
    <property type="match status" value="3"/>
</dbReference>
<protein>
    <recommendedName>
        <fullName evidence="2">Mitochondrial glycine transporter</fullName>
    </recommendedName>
    <alternativeName>
        <fullName evidence="2">Solute carrier family 25 member 38 homolog</fullName>
    </alternativeName>
</protein>
<accession>Q4WQC5</accession>
<comment type="function">
    <text evidence="2">Mitochondrial glycine transporter that imports glycine into the mitochondrial matrix. Plays an important role in providing glycine for the first enzymatic step in heme biosynthesis, the condensation of glycine with succinyl-CoA to produce 5-aminolevulinate (ALA) in the mitochondrial matrix.</text>
</comment>
<comment type="catalytic activity">
    <reaction evidence="1">
        <text>glycine(in) = glycine(out)</text>
        <dbReference type="Rhea" id="RHEA:70715"/>
        <dbReference type="ChEBI" id="CHEBI:57305"/>
    </reaction>
</comment>
<comment type="subcellular location">
    <subcellularLocation>
        <location evidence="2">Mitochondrion inner membrane</location>
        <topology evidence="2">Multi-pass membrane protein</topology>
    </subcellularLocation>
</comment>
<comment type="similarity">
    <text evidence="2">Belongs to the mitochondrial carrier (TC 2.A.29) family. SLC25A38 subfamily.</text>
</comment>